<dbReference type="EMBL" id="AF103874">
    <property type="protein sequence ID" value="AAD19543.1"/>
    <property type="molecule type" value="Genomic_DNA"/>
</dbReference>
<dbReference type="SMR" id="Q9Z645"/>
<dbReference type="GO" id="GO:0030288">
    <property type="term" value="C:outer membrane-bounded periplasmic space"/>
    <property type="evidence" value="ECO:0007669"/>
    <property type="project" value="InterPro"/>
</dbReference>
<dbReference type="GO" id="GO:0005886">
    <property type="term" value="C:plasma membrane"/>
    <property type="evidence" value="ECO:0007669"/>
    <property type="project" value="UniProtKB-SubCell"/>
</dbReference>
<dbReference type="GO" id="GO:0015036">
    <property type="term" value="F:disulfide oxidoreductase activity"/>
    <property type="evidence" value="ECO:0007669"/>
    <property type="project" value="InterPro"/>
</dbReference>
<dbReference type="GO" id="GO:0017004">
    <property type="term" value="P:cytochrome complex assembly"/>
    <property type="evidence" value="ECO:0007669"/>
    <property type="project" value="UniProtKB-KW"/>
</dbReference>
<dbReference type="CDD" id="cd03010">
    <property type="entry name" value="TlpA_like_DsbE"/>
    <property type="match status" value="1"/>
</dbReference>
<dbReference type="Gene3D" id="3.40.30.10">
    <property type="entry name" value="Glutaredoxin"/>
    <property type="match status" value="1"/>
</dbReference>
<dbReference type="InterPro" id="IPR004799">
    <property type="entry name" value="Periplasmic_diS_OxRdtase_DsbE"/>
</dbReference>
<dbReference type="InterPro" id="IPR013740">
    <property type="entry name" value="Redoxin"/>
</dbReference>
<dbReference type="InterPro" id="IPR036249">
    <property type="entry name" value="Thioredoxin-like_sf"/>
</dbReference>
<dbReference type="InterPro" id="IPR017937">
    <property type="entry name" value="Thioredoxin_CS"/>
</dbReference>
<dbReference type="InterPro" id="IPR013766">
    <property type="entry name" value="Thioredoxin_domain"/>
</dbReference>
<dbReference type="InterPro" id="IPR050553">
    <property type="entry name" value="Thioredoxin_ResA/DsbE_sf"/>
</dbReference>
<dbReference type="NCBIfam" id="TIGR00385">
    <property type="entry name" value="dsbE"/>
    <property type="match status" value="1"/>
</dbReference>
<dbReference type="PANTHER" id="PTHR42852">
    <property type="entry name" value="THIOL:DISULFIDE INTERCHANGE PROTEIN DSBE"/>
    <property type="match status" value="1"/>
</dbReference>
<dbReference type="PANTHER" id="PTHR42852:SF6">
    <property type="entry name" value="THIOL:DISULFIDE INTERCHANGE PROTEIN DSBE"/>
    <property type="match status" value="1"/>
</dbReference>
<dbReference type="Pfam" id="PF08534">
    <property type="entry name" value="Redoxin"/>
    <property type="match status" value="1"/>
</dbReference>
<dbReference type="SUPFAM" id="SSF52833">
    <property type="entry name" value="Thioredoxin-like"/>
    <property type="match status" value="1"/>
</dbReference>
<dbReference type="PROSITE" id="PS00194">
    <property type="entry name" value="THIOREDOXIN_1"/>
    <property type="match status" value="1"/>
</dbReference>
<dbReference type="PROSITE" id="PS51352">
    <property type="entry name" value="THIOREDOXIN_2"/>
    <property type="match status" value="1"/>
</dbReference>
<comment type="function">
    <text evidence="1">Involved in disulfide bond formation. Catalyzes a late, reductive step in the assembly of periplasmic c-type cytochromes, probably the reduction of disulfide bonds of the apocytochrome c to allow covalent linkage with the heme. Possible subunit of a heme lyase (By similarity).</text>
</comment>
<comment type="subcellular location">
    <subcellularLocation>
        <location evidence="1">Cell inner membrane</location>
        <topology evidence="1">Single-pass membrane protein</topology>
        <orientation evidence="1">Periplasmic side</orientation>
    </subcellularLocation>
</comment>
<comment type="similarity">
    <text evidence="4">Belongs to the thioredoxin family. DsbE subfamily.</text>
</comment>
<proteinExistence type="inferred from homology"/>
<accession>Q9Z645</accession>
<organism>
    <name type="scientific">Tatumella citrea</name>
    <name type="common">Pantoea citrea</name>
    <dbReference type="NCBI Taxonomy" id="53336"/>
    <lineage>
        <taxon>Bacteria</taxon>
        <taxon>Pseudomonadati</taxon>
        <taxon>Pseudomonadota</taxon>
        <taxon>Gammaproteobacteria</taxon>
        <taxon>Enterobacterales</taxon>
        <taxon>Erwiniaceae</taxon>
        <taxon>Tatumella</taxon>
    </lineage>
</organism>
<name>DSBE_TATCI</name>
<reference key="1">
    <citation type="journal article" date="2000" name="J. Bacteriol.">
        <title>Genetic and biochemical characterization of the pathway in Pantoea citrea leading to pink disease of pineapple.</title>
        <authorList>
            <person name="Pujol C.J."/>
            <person name="Kado C.I."/>
        </authorList>
    </citation>
    <scope>NUCLEOTIDE SEQUENCE [GENOMIC DNA]</scope>
    <source>
        <strain>1056R</strain>
    </source>
</reference>
<protein>
    <recommendedName>
        <fullName>Thiol:disulfide interchange protein DsbE</fullName>
    </recommendedName>
    <alternativeName>
        <fullName>Cytochrome c biogenesis protein CcmG</fullName>
    </alternativeName>
</protein>
<keyword id="KW-0997">Cell inner membrane</keyword>
<keyword id="KW-1003">Cell membrane</keyword>
<keyword id="KW-0201">Cytochrome c-type biogenesis</keyword>
<keyword id="KW-1015">Disulfide bond</keyword>
<keyword id="KW-0472">Membrane</keyword>
<keyword id="KW-0676">Redox-active center</keyword>
<keyword id="KW-0812">Transmembrane</keyword>
<keyword id="KW-1133">Transmembrane helix</keyword>
<feature type="chain" id="PRO_0000201296" description="Thiol:disulfide interchange protein DsbE">
    <location>
        <begin position="1"/>
        <end position="185"/>
    </location>
</feature>
<feature type="topological domain" description="Cytoplasmic" evidence="2">
    <location>
        <begin position="1"/>
        <end position="4"/>
    </location>
</feature>
<feature type="transmembrane region" description="Helical" evidence="2">
    <location>
        <begin position="5"/>
        <end position="25"/>
    </location>
</feature>
<feature type="topological domain" description="Periplasmic" evidence="2">
    <location>
        <begin position="26"/>
        <end position="185"/>
    </location>
</feature>
<feature type="domain" description="Thioredoxin" evidence="3">
    <location>
        <begin position="39"/>
        <end position="177"/>
    </location>
</feature>
<feature type="disulfide bond" description="Redox-active" evidence="3">
    <location>
        <begin position="80"/>
        <end position="83"/>
    </location>
</feature>
<gene>
    <name type="primary">dsbE</name>
    <name type="synonym">ccmG</name>
</gene>
<evidence type="ECO:0000250" key="1"/>
<evidence type="ECO:0000255" key="2"/>
<evidence type="ECO:0000255" key="3">
    <source>
        <dbReference type="PROSITE-ProRule" id="PRU00691"/>
    </source>
</evidence>
<evidence type="ECO:0000305" key="4"/>
<sequence>MNKKILFIPLVLFLLLAAALLWQFNRNADGDDPTLLESALVGKPVPVFKLESLQNPGQLYSQKALINGKPLLLNVWATWCPTCRAEHEYLNTLAEKGVRVVGLNYKDNRVKAINWLNTLGNPYALSLYDGDGMLGLDLGVYGAPETFLIDGKGIIRYRHAGDLNAEVWKDEVQPLWNKYSKLAED</sequence>